<protein>
    <recommendedName>
        <fullName evidence="1">Small ribosomal subunit biogenesis GTPase RsgA</fullName>
        <ecNumber evidence="1">3.6.1.-</ecNumber>
    </recommendedName>
</protein>
<sequence length="364" mass="39384">MNIKQLGWNAHFESHFENYRGQDLVPARVIRVGGGFYTLLGADGEQTATLAGQLRHGSTQDALPAVGDWVGIDSPQEGGIRIHAILPRQTALKRATVSNRKGLVEKPGVPQVLAANVDIAIIVCGLNRDYNPRRIERYLTLVHESGAMPLIVLNKSDICPETQARRAEIESIAFGTPVLVTSAQCGDGLDELASHLKAGSTLVLIGSSGAGKSTLLNRLACAEHQQTSEISAAVGKGMHTTTHRELFPLPGGALVIDTPGLRELHLWGESEAGLASTFPEVIGFAAQCRFSDCQHDQEPDCGIRQALHDGTLDPARLESYLKQRAEIASATLQSELAAQVAQKRKRKTIPRQGKRWRREHGDGQ</sequence>
<organism>
    <name type="scientific">Syntrophotalea carbinolica (strain DSM 2380 / NBRC 103641 / GraBd1)</name>
    <name type="common">Pelobacter carbinolicus</name>
    <dbReference type="NCBI Taxonomy" id="338963"/>
    <lineage>
        <taxon>Bacteria</taxon>
        <taxon>Pseudomonadati</taxon>
        <taxon>Thermodesulfobacteriota</taxon>
        <taxon>Desulfuromonadia</taxon>
        <taxon>Desulfuromonadales</taxon>
        <taxon>Syntrophotaleaceae</taxon>
        <taxon>Syntrophotalea</taxon>
    </lineage>
</organism>
<gene>
    <name evidence="1" type="primary">rsgA</name>
    <name type="ordered locus">Pcar_2903</name>
</gene>
<comment type="function">
    <text evidence="1">One of several proteins that assist in the late maturation steps of the functional core of the 30S ribosomal subunit. Helps release RbfA from mature subunits. May play a role in the assembly of ribosomal proteins into the subunit. Circularly permuted GTPase that catalyzes slow GTP hydrolysis, GTPase activity is stimulated by the 30S ribosomal subunit.</text>
</comment>
<comment type="cofactor">
    <cofactor evidence="1">
        <name>Zn(2+)</name>
        <dbReference type="ChEBI" id="CHEBI:29105"/>
    </cofactor>
    <text evidence="1">Binds 1 zinc ion per subunit.</text>
</comment>
<comment type="subunit">
    <text evidence="1">Monomer. Associates with 30S ribosomal subunit, binds 16S rRNA.</text>
</comment>
<comment type="subcellular location">
    <subcellularLocation>
        <location evidence="1">Cytoplasm</location>
    </subcellularLocation>
</comment>
<comment type="similarity">
    <text evidence="1">Belongs to the TRAFAC class YlqF/YawG GTPase family. RsgA subfamily.</text>
</comment>
<evidence type="ECO:0000255" key="1">
    <source>
        <dbReference type="HAMAP-Rule" id="MF_01820"/>
    </source>
</evidence>
<evidence type="ECO:0000255" key="2">
    <source>
        <dbReference type="PROSITE-ProRule" id="PRU01058"/>
    </source>
</evidence>
<evidence type="ECO:0000256" key="3">
    <source>
        <dbReference type="SAM" id="MobiDB-lite"/>
    </source>
</evidence>
<proteinExistence type="inferred from homology"/>
<keyword id="KW-0963">Cytoplasm</keyword>
<keyword id="KW-0342">GTP-binding</keyword>
<keyword id="KW-0378">Hydrolase</keyword>
<keyword id="KW-0479">Metal-binding</keyword>
<keyword id="KW-0547">Nucleotide-binding</keyword>
<keyword id="KW-1185">Reference proteome</keyword>
<keyword id="KW-0690">Ribosome biogenesis</keyword>
<keyword id="KW-0694">RNA-binding</keyword>
<keyword id="KW-0699">rRNA-binding</keyword>
<keyword id="KW-0862">Zinc</keyword>
<feature type="chain" id="PRO_1000216048" description="Small ribosomal subunit biogenesis GTPase RsgA">
    <location>
        <begin position="1"/>
        <end position="364"/>
    </location>
</feature>
<feature type="domain" description="CP-type G" evidence="2">
    <location>
        <begin position="101"/>
        <end position="264"/>
    </location>
</feature>
<feature type="region of interest" description="Disordered" evidence="3">
    <location>
        <begin position="339"/>
        <end position="364"/>
    </location>
</feature>
<feature type="compositionally biased region" description="Basic residues" evidence="3">
    <location>
        <begin position="342"/>
        <end position="358"/>
    </location>
</feature>
<feature type="binding site" evidence="1">
    <location>
        <begin position="154"/>
        <end position="157"/>
    </location>
    <ligand>
        <name>GTP</name>
        <dbReference type="ChEBI" id="CHEBI:37565"/>
    </ligand>
</feature>
<feature type="binding site" evidence="1">
    <location>
        <begin position="206"/>
        <end position="214"/>
    </location>
    <ligand>
        <name>GTP</name>
        <dbReference type="ChEBI" id="CHEBI:37565"/>
    </ligand>
</feature>
<feature type="binding site" evidence="1">
    <location>
        <position position="288"/>
    </location>
    <ligand>
        <name>Zn(2+)</name>
        <dbReference type="ChEBI" id="CHEBI:29105"/>
    </ligand>
</feature>
<feature type="binding site" evidence="1">
    <location>
        <position position="293"/>
    </location>
    <ligand>
        <name>Zn(2+)</name>
        <dbReference type="ChEBI" id="CHEBI:29105"/>
    </ligand>
</feature>
<feature type="binding site" evidence="1">
    <location>
        <position position="295"/>
    </location>
    <ligand>
        <name>Zn(2+)</name>
        <dbReference type="ChEBI" id="CHEBI:29105"/>
    </ligand>
</feature>
<feature type="binding site" evidence="1">
    <location>
        <position position="301"/>
    </location>
    <ligand>
        <name>Zn(2+)</name>
        <dbReference type="ChEBI" id="CHEBI:29105"/>
    </ligand>
</feature>
<accession>Q3A0G9</accession>
<name>RSGA_SYNC1</name>
<reference key="1">
    <citation type="submission" date="2005-10" db="EMBL/GenBank/DDBJ databases">
        <title>Complete sequence of Pelobacter carbinolicus DSM 2380.</title>
        <authorList>
            <person name="Copeland A."/>
            <person name="Lucas S."/>
            <person name="Lapidus A."/>
            <person name="Barry K."/>
            <person name="Detter J.C."/>
            <person name="Glavina T."/>
            <person name="Hammon N."/>
            <person name="Israni S."/>
            <person name="Pitluck S."/>
            <person name="Chertkov O."/>
            <person name="Schmutz J."/>
            <person name="Larimer F."/>
            <person name="Land M."/>
            <person name="Kyrpides N."/>
            <person name="Ivanova N."/>
            <person name="Richardson P."/>
        </authorList>
    </citation>
    <scope>NUCLEOTIDE SEQUENCE [LARGE SCALE GENOMIC DNA]</scope>
    <source>
        <strain>DSM 2380 / NBRC 103641 / GraBd1</strain>
    </source>
</reference>
<dbReference type="EC" id="3.6.1.-" evidence="1"/>
<dbReference type="EMBL" id="CP000142">
    <property type="protein sequence ID" value="ABA90138.1"/>
    <property type="molecule type" value="Genomic_DNA"/>
</dbReference>
<dbReference type="RefSeq" id="WP_011342689.1">
    <property type="nucleotide sequence ID" value="NC_007498.2"/>
</dbReference>
<dbReference type="SMR" id="Q3A0G9"/>
<dbReference type="STRING" id="338963.Pcar_2903"/>
<dbReference type="KEGG" id="pca:Pcar_2903"/>
<dbReference type="eggNOG" id="COG1162">
    <property type="taxonomic scope" value="Bacteria"/>
</dbReference>
<dbReference type="HOGENOM" id="CLU_033617_0_1_7"/>
<dbReference type="OrthoDB" id="9809485at2"/>
<dbReference type="Proteomes" id="UP000002534">
    <property type="component" value="Chromosome"/>
</dbReference>
<dbReference type="GO" id="GO:0005737">
    <property type="term" value="C:cytoplasm"/>
    <property type="evidence" value="ECO:0007669"/>
    <property type="project" value="UniProtKB-SubCell"/>
</dbReference>
<dbReference type="GO" id="GO:0005525">
    <property type="term" value="F:GTP binding"/>
    <property type="evidence" value="ECO:0007669"/>
    <property type="project" value="UniProtKB-UniRule"/>
</dbReference>
<dbReference type="GO" id="GO:0003924">
    <property type="term" value="F:GTPase activity"/>
    <property type="evidence" value="ECO:0007669"/>
    <property type="project" value="UniProtKB-UniRule"/>
</dbReference>
<dbReference type="GO" id="GO:0046872">
    <property type="term" value="F:metal ion binding"/>
    <property type="evidence" value="ECO:0007669"/>
    <property type="project" value="UniProtKB-KW"/>
</dbReference>
<dbReference type="GO" id="GO:0019843">
    <property type="term" value="F:rRNA binding"/>
    <property type="evidence" value="ECO:0007669"/>
    <property type="project" value="UniProtKB-KW"/>
</dbReference>
<dbReference type="GO" id="GO:0042274">
    <property type="term" value="P:ribosomal small subunit biogenesis"/>
    <property type="evidence" value="ECO:0007669"/>
    <property type="project" value="UniProtKB-UniRule"/>
</dbReference>
<dbReference type="CDD" id="cd01854">
    <property type="entry name" value="YjeQ_EngC"/>
    <property type="match status" value="1"/>
</dbReference>
<dbReference type="Gene3D" id="3.40.50.300">
    <property type="entry name" value="P-loop containing nucleotide triphosphate hydrolases"/>
    <property type="match status" value="1"/>
</dbReference>
<dbReference type="Gene3D" id="1.10.40.50">
    <property type="entry name" value="Probable gtpase engc, domain 3"/>
    <property type="match status" value="1"/>
</dbReference>
<dbReference type="HAMAP" id="MF_01820">
    <property type="entry name" value="GTPase_RsgA"/>
    <property type="match status" value="1"/>
</dbReference>
<dbReference type="InterPro" id="IPR030378">
    <property type="entry name" value="G_CP_dom"/>
</dbReference>
<dbReference type="InterPro" id="IPR027417">
    <property type="entry name" value="P-loop_NTPase"/>
</dbReference>
<dbReference type="InterPro" id="IPR004881">
    <property type="entry name" value="Ribosome_biogen_GTPase_RsgA"/>
</dbReference>
<dbReference type="InterPro" id="IPR010914">
    <property type="entry name" value="RsgA_GTPase_dom"/>
</dbReference>
<dbReference type="NCBIfam" id="TIGR00157">
    <property type="entry name" value="ribosome small subunit-dependent GTPase A"/>
    <property type="match status" value="1"/>
</dbReference>
<dbReference type="PANTHER" id="PTHR32120">
    <property type="entry name" value="SMALL RIBOSOMAL SUBUNIT BIOGENESIS GTPASE RSGA"/>
    <property type="match status" value="1"/>
</dbReference>
<dbReference type="PANTHER" id="PTHR32120:SF10">
    <property type="entry name" value="SMALL RIBOSOMAL SUBUNIT BIOGENESIS GTPASE RSGA"/>
    <property type="match status" value="1"/>
</dbReference>
<dbReference type="Pfam" id="PF03193">
    <property type="entry name" value="RsgA_GTPase"/>
    <property type="match status" value="1"/>
</dbReference>
<dbReference type="SUPFAM" id="SSF52540">
    <property type="entry name" value="P-loop containing nucleoside triphosphate hydrolases"/>
    <property type="match status" value="1"/>
</dbReference>
<dbReference type="PROSITE" id="PS50936">
    <property type="entry name" value="ENGC_GTPASE"/>
    <property type="match status" value="1"/>
</dbReference>
<dbReference type="PROSITE" id="PS51721">
    <property type="entry name" value="G_CP"/>
    <property type="match status" value="1"/>
</dbReference>